<comment type="function">
    <text evidence="1">Ras proteins bind GDP/GTP and possess intrinsic GTPase activity. Plays an important role in the regulation of cell proliferation. May play a role in promoting oncogenic events by inducing transcriptional silencing of tumor suppressor genes (TSGs).</text>
</comment>
<comment type="catalytic activity">
    <reaction evidence="1">
        <text>GTP + H2O = GDP + phosphate + H(+)</text>
        <dbReference type="Rhea" id="RHEA:19669"/>
        <dbReference type="ChEBI" id="CHEBI:15377"/>
        <dbReference type="ChEBI" id="CHEBI:15378"/>
        <dbReference type="ChEBI" id="CHEBI:37565"/>
        <dbReference type="ChEBI" id="CHEBI:43474"/>
        <dbReference type="ChEBI" id="CHEBI:58189"/>
        <dbReference type="EC" id="3.6.5.2"/>
    </reaction>
</comment>
<comment type="activity regulation">
    <text evidence="1">Alternates between an inactive form bound to GDP and an active form bound to GTP (By similarity). Activated by a guanine nucleotide-exchange factor (GEF) and inactivated by a GTPase-activating protein (GAP) (By similarity).</text>
</comment>
<comment type="subcellular location">
    <subcellularLocation>
        <location evidence="1">Cell membrane</location>
        <topology evidence="1">Lipid-anchor</topology>
        <orientation evidence="1">Cytoplasmic side</orientation>
    </subcellularLocation>
    <subcellularLocation>
        <location evidence="1">Cytoplasm</location>
    </subcellularLocation>
</comment>
<comment type="similarity">
    <text evidence="3">Belongs to the small GTPase superfamily. Ras family.</text>
</comment>
<keyword id="KW-1003">Cell membrane</keyword>
<keyword id="KW-0963">Cytoplasm</keyword>
<keyword id="KW-0342">GTP-binding</keyword>
<keyword id="KW-0378">Hydrolase</keyword>
<keyword id="KW-0449">Lipoprotein</keyword>
<keyword id="KW-0472">Membrane</keyword>
<keyword id="KW-0488">Methylation</keyword>
<keyword id="KW-0547">Nucleotide-binding</keyword>
<keyword id="KW-0636">Prenylation</keyword>
<keyword id="KW-1185">Reference proteome</keyword>
<dbReference type="EC" id="3.6.5.2" evidence="1"/>
<dbReference type="EMBL" id="U53782">
    <property type="protein sequence ID" value="AAD10839.1"/>
    <property type="molecule type" value="mRNA"/>
</dbReference>
<dbReference type="SMR" id="Q9YH38"/>
<dbReference type="Ensembl" id="ENSCCRT00015066163.1">
    <property type="protein sequence ID" value="ENSCCRP00015064053.1"/>
    <property type="gene ID" value="ENSCCRG00015026141.1"/>
</dbReference>
<dbReference type="Ensembl" id="ENSCCRT00020063392.1">
    <property type="protein sequence ID" value="ENSCCRP00020057501.1"/>
    <property type="gene ID" value="ENSCCRG00020027247.1"/>
</dbReference>
<dbReference type="GeneID" id="109059246"/>
<dbReference type="KEGG" id="ccar:109059246"/>
<dbReference type="OMA" id="LEDIHHY"/>
<dbReference type="OrthoDB" id="5976022at2759"/>
<dbReference type="Proteomes" id="UP000694384">
    <property type="component" value="Unplaced"/>
</dbReference>
<dbReference type="Proteomes" id="UP000694427">
    <property type="component" value="Unplaced"/>
</dbReference>
<dbReference type="Proteomes" id="UP000694700">
    <property type="component" value="Unplaced"/>
</dbReference>
<dbReference type="Proteomes" id="UP000694701">
    <property type="component" value="Unplaced"/>
</dbReference>
<dbReference type="Proteomes" id="UP001155660">
    <property type="component" value="Chromosome B25"/>
</dbReference>
<dbReference type="GO" id="GO:0005737">
    <property type="term" value="C:cytoplasm"/>
    <property type="evidence" value="ECO:0000250"/>
    <property type="project" value="UniProtKB"/>
</dbReference>
<dbReference type="GO" id="GO:0009898">
    <property type="term" value="C:cytoplasmic side of plasma membrane"/>
    <property type="evidence" value="ECO:0000250"/>
    <property type="project" value="UniProtKB"/>
</dbReference>
<dbReference type="GO" id="GO:0003925">
    <property type="term" value="F:G protein activity"/>
    <property type="evidence" value="ECO:0007669"/>
    <property type="project" value="UniProtKB-EC"/>
</dbReference>
<dbReference type="GO" id="GO:0005525">
    <property type="term" value="F:GTP binding"/>
    <property type="evidence" value="ECO:0007669"/>
    <property type="project" value="UniProtKB-KW"/>
</dbReference>
<dbReference type="GO" id="GO:0007165">
    <property type="term" value="P:signal transduction"/>
    <property type="evidence" value="ECO:0007669"/>
    <property type="project" value="InterPro"/>
</dbReference>
<dbReference type="CDD" id="cd04138">
    <property type="entry name" value="H_N_K_Ras_like"/>
    <property type="match status" value="1"/>
</dbReference>
<dbReference type="FunFam" id="3.40.50.300:FF:000096">
    <property type="entry name" value="KRAS proto-oncogene, GTPase"/>
    <property type="match status" value="1"/>
</dbReference>
<dbReference type="Gene3D" id="3.40.50.300">
    <property type="entry name" value="P-loop containing nucleotide triphosphate hydrolases"/>
    <property type="match status" value="1"/>
</dbReference>
<dbReference type="InterPro" id="IPR027417">
    <property type="entry name" value="P-loop_NTPase"/>
</dbReference>
<dbReference type="InterPro" id="IPR005225">
    <property type="entry name" value="Small_GTP-bd"/>
</dbReference>
<dbReference type="InterPro" id="IPR001806">
    <property type="entry name" value="Small_GTPase"/>
</dbReference>
<dbReference type="InterPro" id="IPR020849">
    <property type="entry name" value="Small_GTPase_Ras-type"/>
</dbReference>
<dbReference type="NCBIfam" id="TIGR00231">
    <property type="entry name" value="small_GTP"/>
    <property type="match status" value="1"/>
</dbReference>
<dbReference type="PANTHER" id="PTHR24070">
    <property type="entry name" value="RAS, DI-RAS, AND RHEB FAMILY MEMBERS OF SMALL GTPASE SUPERFAMILY"/>
    <property type="match status" value="1"/>
</dbReference>
<dbReference type="Pfam" id="PF00071">
    <property type="entry name" value="Ras"/>
    <property type="match status" value="1"/>
</dbReference>
<dbReference type="PRINTS" id="PR00449">
    <property type="entry name" value="RASTRNSFRMNG"/>
</dbReference>
<dbReference type="SMART" id="SM00175">
    <property type="entry name" value="RAB"/>
    <property type="match status" value="1"/>
</dbReference>
<dbReference type="SMART" id="SM00173">
    <property type="entry name" value="RAS"/>
    <property type="match status" value="1"/>
</dbReference>
<dbReference type="SMART" id="SM00174">
    <property type="entry name" value="RHO"/>
    <property type="match status" value="1"/>
</dbReference>
<dbReference type="SUPFAM" id="SSF52540">
    <property type="entry name" value="P-loop containing nucleoside triphosphate hydrolases"/>
    <property type="match status" value="1"/>
</dbReference>
<dbReference type="PROSITE" id="PS51421">
    <property type="entry name" value="RAS"/>
    <property type="match status" value="1"/>
</dbReference>
<sequence>MTEYKLVVVGAGGVGKSALTIQLIQNHFVDEYDPTIEDSYRKQVVIDGETCLLDILDTAGQEEYSAMRDQYMRTGEGFLCVFAINNTKSFEDIHHYREQIKRVKDSEDVPMVLVGNKCDLPSRSVDTKQAQDLARSYGIPFIETSAKTRQGVDDAFYTLVREIRKHKEKMSKEGKKKKKKSKTKCVLM</sequence>
<protein>
    <recommendedName>
        <fullName>GTPase KRas</fullName>
        <ecNumber evidence="1">3.6.5.2</ecNumber>
    </recommendedName>
    <alternativeName>
        <fullName>Ki-Ras</fullName>
        <shortName>K-ras</shortName>
    </alternativeName>
</protein>
<name>RASK_CYPCA</name>
<proteinExistence type="evidence at transcript level"/>
<evidence type="ECO:0000250" key="1">
    <source>
        <dbReference type="UniProtKB" id="P01116"/>
    </source>
</evidence>
<evidence type="ECO:0000256" key="2">
    <source>
        <dbReference type="SAM" id="MobiDB-lite"/>
    </source>
</evidence>
<evidence type="ECO:0000305" key="3"/>
<reference key="1">
    <citation type="submission" date="1996-04" db="EMBL/GenBank/DDBJ databases">
        <title>Molecular cloning and sequencing of two carp cDNAs encoding ras-related proteins.</title>
        <authorList>
            <person name="Chang M.S."/>
            <person name="Chang Y."/>
            <person name="Chang G.D."/>
            <person name="Huang F.L."/>
            <person name="Huang C.-J."/>
        </authorList>
    </citation>
    <scope>NUCLEOTIDE SEQUENCE [MRNA]</scope>
</reference>
<accession>Q9YH38</accession>
<feature type="chain" id="PRO_0000082646" description="GTPase KRas">
    <location>
        <begin position="1"/>
        <end position="185"/>
    </location>
</feature>
<feature type="propeptide" id="PRO_0000281296" description="Removed in mature form" evidence="1">
    <location>
        <begin position="186"/>
        <end position="188"/>
    </location>
</feature>
<feature type="region of interest" description="Disordered" evidence="2">
    <location>
        <begin position="167"/>
        <end position="188"/>
    </location>
</feature>
<feature type="short sequence motif" description="Effector region">
    <location>
        <begin position="32"/>
        <end position="40"/>
    </location>
</feature>
<feature type="binding site" evidence="1">
    <location>
        <begin position="10"/>
        <end position="18"/>
    </location>
    <ligand>
        <name>GTP</name>
        <dbReference type="ChEBI" id="CHEBI:37565"/>
    </ligand>
</feature>
<feature type="binding site" evidence="1">
    <location>
        <begin position="29"/>
        <end position="35"/>
    </location>
    <ligand>
        <name>GTP</name>
        <dbReference type="ChEBI" id="CHEBI:37565"/>
    </ligand>
</feature>
<feature type="binding site" evidence="1">
    <location>
        <begin position="59"/>
        <end position="60"/>
    </location>
    <ligand>
        <name>GTP</name>
        <dbReference type="ChEBI" id="CHEBI:37565"/>
    </ligand>
</feature>
<feature type="binding site" evidence="1">
    <location>
        <begin position="116"/>
        <end position="119"/>
    </location>
    <ligand>
        <name>GTP</name>
        <dbReference type="ChEBI" id="CHEBI:37565"/>
    </ligand>
</feature>
<feature type="modified residue" description="Cysteine methyl ester" evidence="1">
    <location>
        <position position="185"/>
    </location>
</feature>
<feature type="lipid moiety-binding region" description="S-farnesyl cysteine" evidence="1">
    <location>
        <position position="185"/>
    </location>
</feature>
<organism>
    <name type="scientific">Cyprinus carpio</name>
    <name type="common">Common carp</name>
    <dbReference type="NCBI Taxonomy" id="7962"/>
    <lineage>
        <taxon>Eukaryota</taxon>
        <taxon>Metazoa</taxon>
        <taxon>Chordata</taxon>
        <taxon>Craniata</taxon>
        <taxon>Vertebrata</taxon>
        <taxon>Euteleostomi</taxon>
        <taxon>Actinopterygii</taxon>
        <taxon>Neopterygii</taxon>
        <taxon>Teleostei</taxon>
        <taxon>Ostariophysi</taxon>
        <taxon>Cypriniformes</taxon>
        <taxon>Cyprinidae</taxon>
        <taxon>Cyprininae</taxon>
        <taxon>Cyprinus</taxon>
    </lineage>
</organism>
<gene>
    <name type="primary">kras</name>
</gene>